<organism>
    <name type="scientific">Methanococcoides burtonii (strain DSM 6242 / NBRC 107633 / OCM 468 / ACE-M)</name>
    <dbReference type="NCBI Taxonomy" id="259564"/>
    <lineage>
        <taxon>Archaea</taxon>
        <taxon>Methanobacteriati</taxon>
        <taxon>Methanobacteriota</taxon>
        <taxon>Stenosarchaea group</taxon>
        <taxon>Methanomicrobia</taxon>
        <taxon>Methanosarcinales</taxon>
        <taxon>Methanosarcinaceae</taxon>
        <taxon>Methanococcoides</taxon>
    </lineage>
</organism>
<comment type="function">
    <text evidence="1">Component of the A-type ATP synthase that produces ATP from ADP in the presence of a proton gradient across the membrane. The A chain is the catalytic subunit.</text>
</comment>
<comment type="catalytic activity">
    <reaction evidence="1">
        <text>ATP + H2O + 4 H(+)(in) = ADP + phosphate + 5 H(+)(out)</text>
        <dbReference type="Rhea" id="RHEA:57720"/>
        <dbReference type="ChEBI" id="CHEBI:15377"/>
        <dbReference type="ChEBI" id="CHEBI:15378"/>
        <dbReference type="ChEBI" id="CHEBI:30616"/>
        <dbReference type="ChEBI" id="CHEBI:43474"/>
        <dbReference type="ChEBI" id="CHEBI:456216"/>
        <dbReference type="EC" id="7.1.2.2"/>
    </reaction>
</comment>
<comment type="subunit">
    <text evidence="1">Has multiple subunits with at least A(3), B(3), C, D, E, F, H, I and proteolipid K(x).</text>
</comment>
<comment type="subcellular location">
    <subcellularLocation>
        <location evidence="1">Cell membrane</location>
        <topology evidence="1">Peripheral membrane protein</topology>
    </subcellularLocation>
</comment>
<comment type="similarity">
    <text evidence="1">Belongs to the ATPase alpha/beta chains family.</text>
</comment>
<dbReference type="EC" id="7.1.2.2" evidence="1"/>
<dbReference type="EMBL" id="CP000300">
    <property type="protein sequence ID" value="ABE52165.1"/>
    <property type="molecule type" value="Genomic_DNA"/>
</dbReference>
<dbReference type="RefSeq" id="WP_011499311.1">
    <property type="nucleotide sequence ID" value="NC_007955.1"/>
</dbReference>
<dbReference type="SMR" id="Q12WL1"/>
<dbReference type="STRING" id="259564.Mbur_1243"/>
<dbReference type="GeneID" id="3998567"/>
<dbReference type="KEGG" id="mbu:Mbur_1243"/>
<dbReference type="HOGENOM" id="CLU_008162_3_1_2"/>
<dbReference type="OrthoDB" id="115235at2157"/>
<dbReference type="Proteomes" id="UP000001979">
    <property type="component" value="Chromosome"/>
</dbReference>
<dbReference type="GO" id="GO:0005886">
    <property type="term" value="C:plasma membrane"/>
    <property type="evidence" value="ECO:0007669"/>
    <property type="project" value="UniProtKB-SubCell"/>
</dbReference>
<dbReference type="GO" id="GO:0033178">
    <property type="term" value="C:proton-transporting two-sector ATPase complex, catalytic domain"/>
    <property type="evidence" value="ECO:0007669"/>
    <property type="project" value="InterPro"/>
</dbReference>
<dbReference type="GO" id="GO:0005524">
    <property type="term" value="F:ATP binding"/>
    <property type="evidence" value="ECO:0007669"/>
    <property type="project" value="UniProtKB-UniRule"/>
</dbReference>
<dbReference type="GO" id="GO:0046933">
    <property type="term" value="F:proton-transporting ATP synthase activity, rotational mechanism"/>
    <property type="evidence" value="ECO:0007669"/>
    <property type="project" value="UniProtKB-UniRule"/>
</dbReference>
<dbReference type="GO" id="GO:0046961">
    <property type="term" value="F:proton-transporting ATPase activity, rotational mechanism"/>
    <property type="evidence" value="ECO:0007669"/>
    <property type="project" value="InterPro"/>
</dbReference>
<dbReference type="GO" id="GO:0042777">
    <property type="term" value="P:proton motive force-driven plasma membrane ATP synthesis"/>
    <property type="evidence" value="ECO:0007669"/>
    <property type="project" value="UniProtKB-UniRule"/>
</dbReference>
<dbReference type="CDD" id="cd18111">
    <property type="entry name" value="ATP-synt_V_A-type_alpha_C"/>
    <property type="match status" value="1"/>
</dbReference>
<dbReference type="CDD" id="cd18119">
    <property type="entry name" value="ATP-synt_V_A-type_alpha_N"/>
    <property type="match status" value="1"/>
</dbReference>
<dbReference type="CDD" id="cd01134">
    <property type="entry name" value="V_A-ATPase_A"/>
    <property type="match status" value="1"/>
</dbReference>
<dbReference type="FunFam" id="3.40.50.300:FF:000675">
    <property type="entry name" value="V-type ATP synthase alpha chain"/>
    <property type="match status" value="1"/>
</dbReference>
<dbReference type="FunFam" id="1.10.1140.10:FF:000002">
    <property type="entry name" value="V-type proton ATPase catalytic subunit A"/>
    <property type="match status" value="1"/>
</dbReference>
<dbReference type="FunFam" id="2.40.50.100:FF:000008">
    <property type="entry name" value="V-type proton ATPase catalytic subunit A"/>
    <property type="match status" value="1"/>
</dbReference>
<dbReference type="Gene3D" id="2.40.30.20">
    <property type="match status" value="1"/>
</dbReference>
<dbReference type="Gene3D" id="2.40.50.100">
    <property type="match status" value="1"/>
</dbReference>
<dbReference type="Gene3D" id="1.10.1140.10">
    <property type="entry name" value="Bovine Mitochondrial F1-atpase, Atp Synthase Beta Chain, Chain D, domain 3"/>
    <property type="match status" value="1"/>
</dbReference>
<dbReference type="Gene3D" id="3.40.50.300">
    <property type="entry name" value="P-loop containing nucleotide triphosphate hydrolases"/>
    <property type="match status" value="1"/>
</dbReference>
<dbReference type="HAMAP" id="MF_00309">
    <property type="entry name" value="ATP_synth_A_arch"/>
    <property type="match status" value="1"/>
</dbReference>
<dbReference type="InterPro" id="IPR055190">
    <property type="entry name" value="ATP-synt_VA_C"/>
</dbReference>
<dbReference type="InterPro" id="IPR031686">
    <property type="entry name" value="ATP-synth_a_Xtn"/>
</dbReference>
<dbReference type="InterPro" id="IPR023366">
    <property type="entry name" value="ATP_synth_asu-like_sf"/>
</dbReference>
<dbReference type="InterPro" id="IPR005726">
    <property type="entry name" value="ATP_synth_asu_arc"/>
</dbReference>
<dbReference type="InterPro" id="IPR020003">
    <property type="entry name" value="ATPase_a/bsu_AS"/>
</dbReference>
<dbReference type="InterPro" id="IPR004100">
    <property type="entry name" value="ATPase_F1/V1/A1_a/bsu_N"/>
</dbReference>
<dbReference type="InterPro" id="IPR036121">
    <property type="entry name" value="ATPase_F1/V1/A1_a/bsu_N_sf"/>
</dbReference>
<dbReference type="InterPro" id="IPR000194">
    <property type="entry name" value="ATPase_F1/V1/A1_a/bsu_nucl-bd"/>
</dbReference>
<dbReference type="InterPro" id="IPR024034">
    <property type="entry name" value="ATPase_F1/V1_b/a_C"/>
</dbReference>
<dbReference type="InterPro" id="IPR027417">
    <property type="entry name" value="P-loop_NTPase"/>
</dbReference>
<dbReference type="InterPro" id="IPR022878">
    <property type="entry name" value="V-ATPase_asu"/>
</dbReference>
<dbReference type="NCBIfam" id="TIGR01043">
    <property type="entry name" value="ATP_syn_A_arch"/>
    <property type="match status" value="1"/>
</dbReference>
<dbReference type="NCBIfam" id="NF003220">
    <property type="entry name" value="PRK04192.1"/>
    <property type="match status" value="1"/>
</dbReference>
<dbReference type="PANTHER" id="PTHR43607:SF1">
    <property type="entry name" value="H(+)-TRANSPORTING TWO-SECTOR ATPASE"/>
    <property type="match status" value="1"/>
</dbReference>
<dbReference type="PANTHER" id="PTHR43607">
    <property type="entry name" value="V-TYPE PROTON ATPASE CATALYTIC SUBUNIT A"/>
    <property type="match status" value="1"/>
</dbReference>
<dbReference type="Pfam" id="PF00006">
    <property type="entry name" value="ATP-synt_ab"/>
    <property type="match status" value="1"/>
</dbReference>
<dbReference type="Pfam" id="PF02874">
    <property type="entry name" value="ATP-synt_ab_N"/>
    <property type="match status" value="1"/>
</dbReference>
<dbReference type="Pfam" id="PF16886">
    <property type="entry name" value="ATP-synt_ab_Xtn"/>
    <property type="match status" value="1"/>
</dbReference>
<dbReference type="Pfam" id="PF22919">
    <property type="entry name" value="ATP-synt_VA_C"/>
    <property type="match status" value="1"/>
</dbReference>
<dbReference type="SUPFAM" id="SSF47917">
    <property type="entry name" value="C-terminal domain of alpha and beta subunits of F1 ATP synthase"/>
    <property type="match status" value="1"/>
</dbReference>
<dbReference type="SUPFAM" id="SSF50615">
    <property type="entry name" value="N-terminal domain of alpha and beta subunits of F1 ATP synthase"/>
    <property type="match status" value="1"/>
</dbReference>
<dbReference type="SUPFAM" id="SSF52540">
    <property type="entry name" value="P-loop containing nucleoside triphosphate hydrolases"/>
    <property type="match status" value="1"/>
</dbReference>
<dbReference type="PROSITE" id="PS00152">
    <property type="entry name" value="ATPASE_ALPHA_BETA"/>
    <property type="match status" value="1"/>
</dbReference>
<protein>
    <recommendedName>
        <fullName evidence="1">A-type ATP synthase subunit A</fullName>
        <ecNumber evidence="1">7.1.2.2</ecNumber>
    </recommendedName>
</protein>
<reference key="1">
    <citation type="journal article" date="2009" name="ISME J.">
        <title>The genome sequence of the psychrophilic archaeon, Methanococcoides burtonii: the role of genome evolution in cold adaptation.</title>
        <authorList>
            <person name="Allen M.A."/>
            <person name="Lauro F.M."/>
            <person name="Williams T.J."/>
            <person name="Burg D."/>
            <person name="Siddiqui K.S."/>
            <person name="De Francisci D."/>
            <person name="Chong K.W."/>
            <person name="Pilak O."/>
            <person name="Chew H.H."/>
            <person name="De Maere M.Z."/>
            <person name="Ting L."/>
            <person name="Katrib M."/>
            <person name="Ng C."/>
            <person name="Sowers K.R."/>
            <person name="Galperin M.Y."/>
            <person name="Anderson I.J."/>
            <person name="Ivanova N."/>
            <person name="Dalin E."/>
            <person name="Martinez M."/>
            <person name="Lapidus A."/>
            <person name="Hauser L."/>
            <person name="Land M."/>
            <person name="Thomas T."/>
            <person name="Cavicchioli R."/>
        </authorList>
    </citation>
    <scope>NUCLEOTIDE SEQUENCE [LARGE SCALE GENOMIC DNA]</scope>
    <source>
        <strain>DSM 6242 / NBRC 107633 / OCM 468 / ACE-M</strain>
    </source>
</reference>
<accession>Q12WL1</accession>
<keyword id="KW-0066">ATP synthesis</keyword>
<keyword id="KW-0067">ATP-binding</keyword>
<keyword id="KW-1003">Cell membrane</keyword>
<keyword id="KW-0375">Hydrogen ion transport</keyword>
<keyword id="KW-0406">Ion transport</keyword>
<keyword id="KW-0472">Membrane</keyword>
<keyword id="KW-0547">Nucleotide-binding</keyword>
<keyword id="KW-1278">Translocase</keyword>
<keyword id="KW-0813">Transport</keyword>
<gene>
    <name evidence="1" type="primary">atpA</name>
    <name type="ordered locus">Mbur_1243</name>
</gene>
<evidence type="ECO:0000255" key="1">
    <source>
        <dbReference type="HAMAP-Rule" id="MF_00309"/>
    </source>
</evidence>
<proteinExistence type="inferred from homology"/>
<name>AATA_METBU</name>
<feature type="chain" id="PRO_1000059346" description="A-type ATP synthase subunit A">
    <location>
        <begin position="1"/>
        <end position="578"/>
    </location>
</feature>
<feature type="binding site" evidence="1">
    <location>
        <begin position="228"/>
        <end position="235"/>
    </location>
    <ligand>
        <name>ATP</name>
        <dbReference type="ChEBI" id="CHEBI:30616"/>
    </ligand>
</feature>
<sequence length="578" mass="63810">MEVNGEIYRVAGPVVTVIGIKPRMYDVVKVGHEGLMGEVIRIKGEQATVQVYEDTSGLKPGEPVMNTGLPLSVELGPGLLESIYDGIQRPLPVLQEKMGNFIQRGVTANGLDRERVWEFKPTVSKGDEVKGGNILGLVQETKNIEHKIMVPPSISGTIKEIKAGSFKVDETICVLTDGTEISMMQKWPVRGPRPVAKKLMPTKPLITGQRILDGMFPIAKGGTAAIPGPFGSGKTVTQQQLAKWSDTDIVVYIGCGERGNEMADVLNEFPELEDPKTGRPLMERTVLIANTSNMPVAAREASVYTGITIAEYYRDMGYDVSLMADSSSRWAEAMREISSRLEEMPGEEGYPAYLSARLSEFYERAGAVNSLAGLDGSITVIGAVSPPGGDFSEPVTQNTLRIVKVFWALDAKLSQRRHFPSINWLTSYSLYTQGLADWYSENVGADWTQLRDDAMDLLQQESELQEIVQLVGSDALPEDQQLTLEVARMVREYFLQQNAFHPVDTYCPFDKQYKLLKSITRYGELATAALESGVPMNKIITIKSKDELAKVKFEENFDAALDVVMKKMDEEFAQIGGN</sequence>